<comment type="function">
    <text evidence="1">This is a non-secretory ribonuclease. It is a pyrimidine specific nuclease with a slight preference for U. Cytotoxin and helminthotoxin. Possesses a wide variety of biological activities (By similarity).</text>
</comment>
<comment type="catalytic activity">
    <reaction evidence="3">
        <text>an [RNA] containing cytidine + H2O = an [RNA]-3'-cytidine-3'-phosphate + a 5'-hydroxy-ribonucleotide-3'-[RNA].</text>
        <dbReference type="EC" id="4.6.1.18"/>
    </reaction>
</comment>
<comment type="catalytic activity">
    <reaction evidence="3">
        <text>an [RNA] containing uridine + H2O = an [RNA]-3'-uridine-3'-phosphate + a 5'-hydroxy-ribonucleotide-3'-[RNA].</text>
        <dbReference type="EC" id="4.6.1.18"/>
    </reaction>
</comment>
<comment type="subunit">
    <text evidence="1">Interacts with and forms a tight 1:1 complex with RNH1. Dimerization of two such complexes may occur (By similarity).</text>
</comment>
<comment type="subcellular location">
    <subcellularLocation>
        <location evidence="5">Lysosome</location>
    </subcellularLocation>
    <subcellularLocation>
        <location evidence="1">Cytoplasmic granule</location>
    </subcellularLocation>
    <text evidence="1">Matrix of eosinophil's large specific granule.</text>
</comment>
<comment type="similarity">
    <text evidence="5">Belongs to the pancreatic ribonuclease family.</text>
</comment>
<sequence>MVPKLFTSPICLLLLLGLMGVEGSLHAKPRQFTWAQWFEIQHINMTSGQCTNAMLVINNYQRRCKNQNTFLLTTFADVVHVCGNPSMPCPSNTSLNNCHHSGVQVPLIHCNLTTPSRRISNCRYTQTTANKYYIVACNNSDPVRDPPQYPVVPVHLDRVI</sequence>
<evidence type="ECO:0000250" key="1"/>
<evidence type="ECO:0000250" key="2">
    <source>
        <dbReference type="UniProtKB" id="P10153"/>
    </source>
</evidence>
<evidence type="ECO:0000250" key="3">
    <source>
        <dbReference type="UniProtKB" id="P47784"/>
    </source>
</evidence>
<evidence type="ECO:0000255" key="4"/>
<evidence type="ECO:0000305" key="5"/>
<reference key="1">
    <citation type="journal article" date="2002" name="Proc. Natl. Acad. Sci. U.S.A.">
        <title>Complementary advantageous substitutions in the evolution of an antiviral RNase of higher primates.</title>
        <authorList>
            <person name="Zhang J."/>
            <person name="Rosenberg H.F."/>
        </authorList>
    </citation>
    <scope>NUCLEOTIDE SEQUENCE [GENOMIC DNA]</scope>
</reference>
<organism>
    <name type="scientific">Macaca nemestrina</name>
    <name type="common">Pig-tailed macaque</name>
    <dbReference type="NCBI Taxonomy" id="9545"/>
    <lineage>
        <taxon>Eukaryota</taxon>
        <taxon>Metazoa</taxon>
        <taxon>Chordata</taxon>
        <taxon>Craniata</taxon>
        <taxon>Vertebrata</taxon>
        <taxon>Euteleostomi</taxon>
        <taxon>Mammalia</taxon>
        <taxon>Eutheria</taxon>
        <taxon>Euarchontoglires</taxon>
        <taxon>Primates</taxon>
        <taxon>Haplorrhini</taxon>
        <taxon>Catarrhini</taxon>
        <taxon>Cercopithecidae</taxon>
        <taxon>Cercopithecinae</taxon>
        <taxon>Macaca</taxon>
    </lineage>
</organism>
<proteinExistence type="inferred from homology"/>
<gene>
    <name type="primary">RNASE2</name>
    <name type="synonym">EDN</name>
    <name type="synonym">RNS2</name>
</gene>
<feature type="signal peptide" evidence="1">
    <location>
        <begin position="1"/>
        <end position="27"/>
    </location>
</feature>
<feature type="chain" id="PRO_0000030877" description="Non-secretory ribonuclease">
    <location>
        <begin position="28"/>
        <end position="160"/>
    </location>
</feature>
<feature type="active site" description="Proton acceptor" evidence="1">
    <location>
        <position position="42"/>
    </location>
</feature>
<feature type="active site" description="Proton donor" evidence="1">
    <location>
        <position position="155"/>
    </location>
</feature>
<feature type="binding site" evidence="1">
    <location>
        <begin position="65"/>
        <end position="69"/>
    </location>
    <ligand>
        <name>substrate</name>
    </ligand>
</feature>
<feature type="modified residue" description="3'-nitrotyrosine" evidence="2">
    <location>
        <position position="60"/>
    </location>
</feature>
<feature type="glycosylation site" description="C-linked (Man) tryptophan" evidence="2">
    <location>
        <position position="34"/>
    </location>
</feature>
<feature type="glycosylation site" description="N-linked (GlcNAc...) asparagine" evidence="4">
    <location>
        <position position="44"/>
    </location>
</feature>
<feature type="glycosylation site" description="N-linked (GlcNAc...) asparagine" evidence="4">
    <location>
        <position position="92"/>
    </location>
</feature>
<feature type="glycosylation site" description="N-linked (GlcNAc...) asparagine" evidence="4">
    <location>
        <position position="111"/>
    </location>
</feature>
<feature type="glycosylation site" description="N-linked (GlcNAc...) asparagine" evidence="4">
    <location>
        <position position="138"/>
    </location>
</feature>
<feature type="disulfide bond" evidence="1">
    <location>
        <begin position="50"/>
        <end position="110"/>
    </location>
</feature>
<feature type="disulfide bond" evidence="1">
    <location>
        <begin position="64"/>
        <end position="122"/>
    </location>
</feature>
<feature type="disulfide bond" evidence="1">
    <location>
        <begin position="82"/>
        <end position="137"/>
    </location>
</feature>
<feature type="disulfide bond" evidence="1">
    <location>
        <begin position="89"/>
        <end position="98"/>
    </location>
</feature>
<name>RNAS2_MACNE</name>
<accession>Q8SPY5</accession>
<protein>
    <recommendedName>
        <fullName>Non-secretory ribonuclease</fullName>
        <ecNumber evidence="3">4.6.1.18</ecNumber>
    </recommendedName>
    <alternativeName>
        <fullName>Eosinophil-derived neurotoxin</fullName>
    </alternativeName>
    <alternativeName>
        <fullName>RNase UpI-2</fullName>
    </alternativeName>
    <alternativeName>
        <fullName>Ribonuclease 2</fullName>
        <shortName>RNase 2</shortName>
    </alternativeName>
    <alternativeName>
        <fullName>Ribonuclease US</fullName>
    </alternativeName>
</protein>
<dbReference type="EC" id="4.6.1.18" evidence="3"/>
<dbReference type="EMBL" id="AF479631">
    <property type="protein sequence ID" value="AAM14438.1"/>
    <property type="molecule type" value="Genomic_DNA"/>
</dbReference>
<dbReference type="SMR" id="Q8SPY5"/>
<dbReference type="GlyCosmos" id="Q8SPY5">
    <property type="glycosylation" value="5 sites, No reported glycans"/>
</dbReference>
<dbReference type="GeneID" id="105496559"/>
<dbReference type="KEGG" id="mni:105496559"/>
<dbReference type="OrthoDB" id="6380at314294"/>
<dbReference type="Proteomes" id="UP000233120">
    <property type="component" value="Unassembled WGS sequence"/>
</dbReference>
<dbReference type="GO" id="GO:0005615">
    <property type="term" value="C:extracellular space"/>
    <property type="evidence" value="ECO:0007669"/>
    <property type="project" value="TreeGrafter"/>
</dbReference>
<dbReference type="GO" id="GO:0005764">
    <property type="term" value="C:lysosome"/>
    <property type="evidence" value="ECO:0007669"/>
    <property type="project" value="UniProtKB-SubCell"/>
</dbReference>
<dbReference type="GO" id="GO:0016829">
    <property type="term" value="F:lyase activity"/>
    <property type="evidence" value="ECO:0007669"/>
    <property type="project" value="UniProtKB-KW"/>
</dbReference>
<dbReference type="GO" id="GO:0003676">
    <property type="term" value="F:nucleic acid binding"/>
    <property type="evidence" value="ECO:0007669"/>
    <property type="project" value="InterPro"/>
</dbReference>
<dbReference type="GO" id="GO:0004522">
    <property type="term" value="F:ribonuclease A activity"/>
    <property type="evidence" value="ECO:0007669"/>
    <property type="project" value="UniProtKB-EC"/>
</dbReference>
<dbReference type="GO" id="GO:0006935">
    <property type="term" value="P:chemotaxis"/>
    <property type="evidence" value="ECO:0007669"/>
    <property type="project" value="TreeGrafter"/>
</dbReference>
<dbReference type="GO" id="GO:0051607">
    <property type="term" value="P:defense response to virus"/>
    <property type="evidence" value="ECO:0007669"/>
    <property type="project" value="UniProtKB-ARBA"/>
</dbReference>
<dbReference type="GO" id="GO:0002227">
    <property type="term" value="P:innate immune response in mucosa"/>
    <property type="evidence" value="ECO:0007669"/>
    <property type="project" value="TreeGrafter"/>
</dbReference>
<dbReference type="CDD" id="cd06265">
    <property type="entry name" value="RNase_A_canonical"/>
    <property type="match status" value="1"/>
</dbReference>
<dbReference type="FunFam" id="3.10.130.10:FF:000001">
    <property type="entry name" value="Ribonuclease pancreatic"/>
    <property type="match status" value="1"/>
</dbReference>
<dbReference type="Gene3D" id="3.10.130.10">
    <property type="entry name" value="Ribonuclease A-like domain"/>
    <property type="match status" value="1"/>
</dbReference>
<dbReference type="InterPro" id="IPR001427">
    <property type="entry name" value="RNaseA"/>
</dbReference>
<dbReference type="InterPro" id="IPR036816">
    <property type="entry name" value="RNaseA-like_dom_sf"/>
</dbReference>
<dbReference type="InterPro" id="IPR023411">
    <property type="entry name" value="RNaseA_AS"/>
</dbReference>
<dbReference type="InterPro" id="IPR023412">
    <property type="entry name" value="RNaseA_domain"/>
</dbReference>
<dbReference type="PANTHER" id="PTHR11437:SF62">
    <property type="entry name" value="NON-SECRETORY RIBONUCLEASE"/>
    <property type="match status" value="1"/>
</dbReference>
<dbReference type="PANTHER" id="PTHR11437">
    <property type="entry name" value="RIBONUCLEASE"/>
    <property type="match status" value="1"/>
</dbReference>
<dbReference type="Pfam" id="PF00074">
    <property type="entry name" value="RnaseA"/>
    <property type="match status" value="1"/>
</dbReference>
<dbReference type="PRINTS" id="PR00794">
    <property type="entry name" value="RIBONUCLEASE"/>
</dbReference>
<dbReference type="SMART" id="SM00092">
    <property type="entry name" value="RNAse_Pc"/>
    <property type="match status" value="1"/>
</dbReference>
<dbReference type="SUPFAM" id="SSF54076">
    <property type="entry name" value="RNase A-like"/>
    <property type="match status" value="1"/>
</dbReference>
<dbReference type="PROSITE" id="PS00127">
    <property type="entry name" value="RNASE_PANCREATIC"/>
    <property type="match status" value="1"/>
</dbReference>
<keyword id="KW-1015">Disulfide bond</keyword>
<keyword id="KW-0255">Endonuclease</keyword>
<keyword id="KW-0325">Glycoprotein</keyword>
<keyword id="KW-0378">Hydrolase</keyword>
<keyword id="KW-0456">Lyase</keyword>
<keyword id="KW-0458">Lysosome</keyword>
<keyword id="KW-0944">Nitration</keyword>
<keyword id="KW-0540">Nuclease</keyword>
<keyword id="KW-1185">Reference proteome</keyword>
<keyword id="KW-0732">Signal</keyword>